<feature type="chain" id="PRO_0000112196" description="ATP synthase subunit c, chloroplastic">
    <location>
        <begin position="1"/>
        <end position="82"/>
    </location>
</feature>
<feature type="transmembrane region" description="Helical" evidence="1">
    <location>
        <begin position="4"/>
        <end position="24"/>
    </location>
</feature>
<feature type="transmembrane region" description="Helical" evidence="1">
    <location>
        <begin position="57"/>
        <end position="77"/>
    </location>
</feature>
<feature type="site" description="Reversibly protonated during proton transport" evidence="1">
    <location>
        <position position="61"/>
    </location>
</feature>
<protein>
    <recommendedName>
        <fullName evidence="1">ATP synthase subunit c, chloroplastic</fullName>
    </recommendedName>
    <alternativeName>
        <fullName evidence="1">ATP synthase F(0) sector subunit c</fullName>
    </alternativeName>
    <alternativeName>
        <fullName evidence="1">ATPase subunit III</fullName>
    </alternativeName>
    <alternativeName>
        <fullName evidence="1">F-type ATPase subunit c</fullName>
        <shortName evidence="1">F-ATPase subunit c</shortName>
    </alternativeName>
    <alternativeName>
        <fullName evidence="1">Lipid-binding protein</fullName>
    </alternativeName>
</protein>
<keyword id="KW-0066">ATP synthesis</keyword>
<keyword id="KW-0138">CF(0)</keyword>
<keyword id="KW-0150">Chloroplast</keyword>
<keyword id="KW-0375">Hydrogen ion transport</keyword>
<keyword id="KW-0406">Ion transport</keyword>
<keyword id="KW-0446">Lipid-binding</keyword>
<keyword id="KW-0472">Membrane</keyword>
<keyword id="KW-0934">Plastid</keyword>
<keyword id="KW-0793">Thylakoid</keyword>
<keyword id="KW-0812">Transmembrane</keyword>
<keyword id="KW-1133">Transmembrane helix</keyword>
<keyword id="KW-0813">Transport</keyword>
<geneLocation type="chloroplast"/>
<evidence type="ECO:0000255" key="1">
    <source>
        <dbReference type="HAMAP-Rule" id="MF_01396"/>
    </source>
</evidence>
<reference key="1">
    <citation type="journal article" date="1992" name="J. Mol. Biol.">
        <title>Chloroplast ATPase genes in the diatom Odontella sinensis reflect cyanobacterial characters in structure and arrangement.</title>
        <authorList>
            <person name="Pancic P.G."/>
            <person name="Strotmann H."/>
            <person name="Kowallik K.V."/>
        </authorList>
    </citation>
    <scope>NUCLEOTIDE SEQUENCE [GENOMIC DNA]</scope>
</reference>
<reference key="2">
    <citation type="journal article" date="1995" name="Plant Mol. Biol. Rep.">
        <title>The chloroplast genome of a chlorophyll a+c-containing alga, Odontella sinensis.</title>
        <authorList>
            <person name="Kowallik K.V."/>
            <person name="Stoebe B."/>
            <person name="Schaffran I."/>
            <person name="Kroth-Pancic P."/>
            <person name="Freier U."/>
        </authorList>
    </citation>
    <scope>NUCLEOTIDE SEQUENCE [LARGE SCALE GENOMIC DNA]</scope>
</reference>
<gene>
    <name evidence="1" type="primary">atpH</name>
</gene>
<organism>
    <name type="scientific">Trieres chinensis</name>
    <name type="common">Marine centric diatom</name>
    <name type="synonym">Odontella sinensis</name>
    <dbReference type="NCBI Taxonomy" id="1514140"/>
    <lineage>
        <taxon>Eukaryota</taxon>
        <taxon>Sar</taxon>
        <taxon>Stramenopiles</taxon>
        <taxon>Ochrophyta</taxon>
        <taxon>Bacillariophyta</taxon>
        <taxon>Mediophyceae</taxon>
        <taxon>Biddulphiophycidae</taxon>
        <taxon>Eupodiscales</taxon>
        <taxon>Parodontellaceae</taxon>
        <taxon>Trieres</taxon>
    </lineage>
</organism>
<accession>Q00824</accession>
<proteinExistence type="inferred from homology"/>
<dbReference type="EMBL" id="X60752">
    <property type="protein sequence ID" value="CAA43153.1"/>
    <property type="molecule type" value="Genomic_DNA"/>
</dbReference>
<dbReference type="EMBL" id="Z67753">
    <property type="protein sequence ID" value="CAA91690.1"/>
    <property type="molecule type" value="Genomic_DNA"/>
</dbReference>
<dbReference type="PIR" id="S24629">
    <property type="entry name" value="S24629"/>
</dbReference>
<dbReference type="RefSeq" id="NP_043658.1">
    <property type="nucleotide sequence ID" value="NC_001713.1"/>
</dbReference>
<dbReference type="SMR" id="Q00824"/>
<dbReference type="GeneID" id="801706"/>
<dbReference type="GO" id="GO:0009535">
    <property type="term" value="C:chloroplast thylakoid membrane"/>
    <property type="evidence" value="ECO:0007669"/>
    <property type="project" value="UniProtKB-SubCell"/>
</dbReference>
<dbReference type="GO" id="GO:0045259">
    <property type="term" value="C:proton-transporting ATP synthase complex"/>
    <property type="evidence" value="ECO:0007669"/>
    <property type="project" value="UniProtKB-KW"/>
</dbReference>
<dbReference type="GO" id="GO:0033177">
    <property type="term" value="C:proton-transporting two-sector ATPase complex, proton-transporting domain"/>
    <property type="evidence" value="ECO:0007669"/>
    <property type="project" value="InterPro"/>
</dbReference>
<dbReference type="GO" id="GO:0008289">
    <property type="term" value="F:lipid binding"/>
    <property type="evidence" value="ECO:0007669"/>
    <property type="project" value="UniProtKB-KW"/>
</dbReference>
<dbReference type="GO" id="GO:0046933">
    <property type="term" value="F:proton-transporting ATP synthase activity, rotational mechanism"/>
    <property type="evidence" value="ECO:0007669"/>
    <property type="project" value="UniProtKB-UniRule"/>
</dbReference>
<dbReference type="CDD" id="cd18183">
    <property type="entry name" value="ATP-synt_Fo_c_ATPH"/>
    <property type="match status" value="1"/>
</dbReference>
<dbReference type="FunFam" id="1.20.20.10:FF:000001">
    <property type="entry name" value="ATP synthase subunit c, chloroplastic"/>
    <property type="match status" value="1"/>
</dbReference>
<dbReference type="Gene3D" id="1.20.20.10">
    <property type="entry name" value="F1F0 ATP synthase subunit C"/>
    <property type="match status" value="1"/>
</dbReference>
<dbReference type="HAMAP" id="MF_01396">
    <property type="entry name" value="ATP_synth_c_bact"/>
    <property type="match status" value="1"/>
</dbReference>
<dbReference type="InterPro" id="IPR005953">
    <property type="entry name" value="ATP_synth_csu_bac/chlpt"/>
</dbReference>
<dbReference type="InterPro" id="IPR000454">
    <property type="entry name" value="ATP_synth_F0_csu"/>
</dbReference>
<dbReference type="InterPro" id="IPR020537">
    <property type="entry name" value="ATP_synth_F0_csu_DDCD_BS"/>
</dbReference>
<dbReference type="InterPro" id="IPR038662">
    <property type="entry name" value="ATP_synth_F0_csu_sf"/>
</dbReference>
<dbReference type="InterPro" id="IPR002379">
    <property type="entry name" value="ATPase_proteolipid_c-like_dom"/>
</dbReference>
<dbReference type="InterPro" id="IPR035921">
    <property type="entry name" value="F/V-ATP_Csub_sf"/>
</dbReference>
<dbReference type="NCBIfam" id="TIGR01260">
    <property type="entry name" value="ATP_synt_c"/>
    <property type="match status" value="1"/>
</dbReference>
<dbReference type="NCBIfam" id="NF005608">
    <property type="entry name" value="PRK07354.1"/>
    <property type="match status" value="1"/>
</dbReference>
<dbReference type="PANTHER" id="PTHR10031">
    <property type="entry name" value="ATP SYNTHASE LIPID-BINDING PROTEIN, MITOCHONDRIAL"/>
    <property type="match status" value="1"/>
</dbReference>
<dbReference type="PANTHER" id="PTHR10031:SF0">
    <property type="entry name" value="ATPASE PROTEIN 9"/>
    <property type="match status" value="1"/>
</dbReference>
<dbReference type="Pfam" id="PF00137">
    <property type="entry name" value="ATP-synt_C"/>
    <property type="match status" value="1"/>
</dbReference>
<dbReference type="PRINTS" id="PR00124">
    <property type="entry name" value="ATPASEC"/>
</dbReference>
<dbReference type="SUPFAM" id="SSF81333">
    <property type="entry name" value="F1F0 ATP synthase subunit C"/>
    <property type="match status" value="1"/>
</dbReference>
<dbReference type="PROSITE" id="PS00605">
    <property type="entry name" value="ATPASE_C"/>
    <property type="match status" value="1"/>
</dbReference>
<sequence length="82" mass="8121">MDSIISAASVIAAGLAIGLAAIGPGIGQGNAAGQAVEGIARQPEGENKIRGTLLLSLAFMEALTIYGLVVALALLFANPFNG</sequence>
<name>ATPH_TRICV</name>
<comment type="function">
    <text evidence="1">F(1)F(0) ATP synthase produces ATP from ADP in the presence of a proton or sodium gradient. F-type ATPases consist of two structural domains, F(1) containing the extramembraneous catalytic core and F(0) containing the membrane proton channel, linked together by a central stalk and a peripheral stalk. During catalysis, ATP synthesis in the catalytic domain of F(1) is coupled via a rotary mechanism of the central stalk subunits to proton translocation.</text>
</comment>
<comment type="function">
    <text evidence="1">Key component of the F(0) channel; it plays a direct role in translocation across the membrane. A homomeric c-ring of between 10-14 subunits forms the central stalk rotor element with the F(1) delta and epsilon subunits.</text>
</comment>
<comment type="subunit">
    <text evidence="1">F-type ATPases have 2 components, F(1) - the catalytic core - and F(0) - the membrane proton channel. F(1) has five subunits: alpha(3), beta(3), gamma(1), delta(1), epsilon(1). F(0) has four main subunits: a(1), b(1), b'(1) and c(10-14). The alpha and beta chains form an alternating ring which encloses part of the gamma chain. F(1) is attached to F(0) by a central stalk formed by the gamma and epsilon chains, while a peripheral stalk is formed by the delta, b and b' chains.</text>
</comment>
<comment type="subcellular location">
    <subcellularLocation>
        <location evidence="1">Plastid</location>
        <location evidence="1">Chloroplast thylakoid membrane</location>
        <topology evidence="1">Multi-pass membrane protein</topology>
    </subcellularLocation>
</comment>
<comment type="miscellaneous">
    <text>In plastids the F-type ATPase is also known as CF(1)CF(0).</text>
</comment>
<comment type="similarity">
    <text evidence="1">Belongs to the ATPase C chain family.</text>
</comment>